<organism>
    <name type="scientific">Corynebacterium glutamicum (strain R)</name>
    <dbReference type="NCBI Taxonomy" id="340322"/>
    <lineage>
        <taxon>Bacteria</taxon>
        <taxon>Bacillati</taxon>
        <taxon>Actinomycetota</taxon>
        <taxon>Actinomycetes</taxon>
        <taxon>Mycobacteriales</taxon>
        <taxon>Corynebacteriaceae</taxon>
        <taxon>Corynebacterium</taxon>
    </lineage>
</organism>
<dbReference type="EMBL" id="AP009044">
    <property type="protein sequence ID" value="BAF53652.1"/>
    <property type="molecule type" value="Genomic_DNA"/>
</dbReference>
<dbReference type="RefSeq" id="WP_003854428.1">
    <property type="nucleotide sequence ID" value="NC_009342.1"/>
</dbReference>
<dbReference type="SMR" id="A4QBQ5"/>
<dbReference type="GeneID" id="1018567"/>
<dbReference type="KEGG" id="cgt:cgR_0681"/>
<dbReference type="HOGENOM" id="CLU_072439_5_0_11"/>
<dbReference type="PhylomeDB" id="A4QBQ5"/>
<dbReference type="Proteomes" id="UP000006698">
    <property type="component" value="Chromosome"/>
</dbReference>
<dbReference type="GO" id="GO:1990904">
    <property type="term" value="C:ribonucleoprotein complex"/>
    <property type="evidence" value="ECO:0007669"/>
    <property type="project" value="UniProtKB-KW"/>
</dbReference>
<dbReference type="GO" id="GO:0005840">
    <property type="term" value="C:ribosome"/>
    <property type="evidence" value="ECO:0007669"/>
    <property type="project" value="UniProtKB-KW"/>
</dbReference>
<dbReference type="GO" id="GO:0019843">
    <property type="term" value="F:rRNA binding"/>
    <property type="evidence" value="ECO:0007669"/>
    <property type="project" value="UniProtKB-UniRule"/>
</dbReference>
<dbReference type="GO" id="GO:0003735">
    <property type="term" value="F:structural constituent of ribosome"/>
    <property type="evidence" value="ECO:0007669"/>
    <property type="project" value="InterPro"/>
</dbReference>
<dbReference type="GO" id="GO:0006412">
    <property type="term" value="P:translation"/>
    <property type="evidence" value="ECO:0007669"/>
    <property type="project" value="UniProtKB-UniRule"/>
</dbReference>
<dbReference type="FunFam" id="3.30.420.80:FF:000001">
    <property type="entry name" value="30S ribosomal protein S11"/>
    <property type="match status" value="1"/>
</dbReference>
<dbReference type="Gene3D" id="3.30.420.80">
    <property type="entry name" value="Ribosomal protein S11"/>
    <property type="match status" value="1"/>
</dbReference>
<dbReference type="HAMAP" id="MF_01310">
    <property type="entry name" value="Ribosomal_uS11"/>
    <property type="match status" value="1"/>
</dbReference>
<dbReference type="InterPro" id="IPR001971">
    <property type="entry name" value="Ribosomal_uS11"/>
</dbReference>
<dbReference type="InterPro" id="IPR019981">
    <property type="entry name" value="Ribosomal_uS11_bac-type"/>
</dbReference>
<dbReference type="InterPro" id="IPR018102">
    <property type="entry name" value="Ribosomal_uS11_CS"/>
</dbReference>
<dbReference type="InterPro" id="IPR036967">
    <property type="entry name" value="Ribosomal_uS11_sf"/>
</dbReference>
<dbReference type="NCBIfam" id="NF003698">
    <property type="entry name" value="PRK05309.1"/>
    <property type="match status" value="1"/>
</dbReference>
<dbReference type="NCBIfam" id="TIGR03632">
    <property type="entry name" value="uS11_bact"/>
    <property type="match status" value="1"/>
</dbReference>
<dbReference type="PANTHER" id="PTHR11759">
    <property type="entry name" value="40S RIBOSOMAL PROTEIN S14/30S RIBOSOMAL PROTEIN S11"/>
    <property type="match status" value="1"/>
</dbReference>
<dbReference type="Pfam" id="PF00411">
    <property type="entry name" value="Ribosomal_S11"/>
    <property type="match status" value="1"/>
</dbReference>
<dbReference type="PIRSF" id="PIRSF002131">
    <property type="entry name" value="Ribosomal_S11"/>
    <property type="match status" value="1"/>
</dbReference>
<dbReference type="SUPFAM" id="SSF53137">
    <property type="entry name" value="Translational machinery components"/>
    <property type="match status" value="1"/>
</dbReference>
<dbReference type="PROSITE" id="PS00054">
    <property type="entry name" value="RIBOSOMAL_S11"/>
    <property type="match status" value="1"/>
</dbReference>
<gene>
    <name evidence="1" type="primary">rpsK</name>
    <name type="ordered locus">cgR_0681</name>
</gene>
<feature type="chain" id="PRO_0000294743" description="Small ribosomal subunit protein uS11">
    <location>
        <begin position="1"/>
        <end position="134"/>
    </location>
</feature>
<sequence length="134" mass="14327">MPPKARTNARRTGRRVVKKNVANGNAYIKSTFNNTIVSITDTNGAVISWASSGHVGFKGSRKSTPFAAQMAAENAARKAMDHGMKKVDVFVKGPGSGRETAIRSLQAAGLEIGSISDVTPQPHNGCRPPKRRRV</sequence>
<comment type="function">
    <text evidence="1">Located on the platform of the 30S subunit, it bridges several disparate RNA helices of the 16S rRNA. Forms part of the Shine-Dalgarno cleft in the 70S ribosome.</text>
</comment>
<comment type="subunit">
    <text evidence="1">Part of the 30S ribosomal subunit. Interacts with proteins S7 and S18. Binds to IF-3.</text>
</comment>
<comment type="similarity">
    <text evidence="1">Belongs to the universal ribosomal protein uS11 family.</text>
</comment>
<proteinExistence type="inferred from homology"/>
<evidence type="ECO:0000255" key="1">
    <source>
        <dbReference type="HAMAP-Rule" id="MF_01310"/>
    </source>
</evidence>
<evidence type="ECO:0000305" key="2"/>
<protein>
    <recommendedName>
        <fullName evidence="1">Small ribosomal subunit protein uS11</fullName>
    </recommendedName>
    <alternativeName>
        <fullName evidence="2">30S ribosomal protein S11</fullName>
    </alternativeName>
</protein>
<name>RS11_CORGB</name>
<accession>A4QBQ5</accession>
<reference key="1">
    <citation type="journal article" date="2007" name="Microbiology">
        <title>Comparative analysis of the Corynebacterium glutamicum group and complete genome sequence of strain R.</title>
        <authorList>
            <person name="Yukawa H."/>
            <person name="Omumasaba C.A."/>
            <person name="Nonaka H."/>
            <person name="Kos P."/>
            <person name="Okai N."/>
            <person name="Suzuki N."/>
            <person name="Suda M."/>
            <person name="Tsuge Y."/>
            <person name="Watanabe J."/>
            <person name="Ikeda Y."/>
            <person name="Vertes A.A."/>
            <person name="Inui M."/>
        </authorList>
    </citation>
    <scope>NUCLEOTIDE SEQUENCE [LARGE SCALE GENOMIC DNA]</scope>
    <source>
        <strain>R</strain>
    </source>
</reference>
<keyword id="KW-0687">Ribonucleoprotein</keyword>
<keyword id="KW-0689">Ribosomal protein</keyword>
<keyword id="KW-0694">RNA-binding</keyword>
<keyword id="KW-0699">rRNA-binding</keyword>